<sequence>MDQLRQSLLDAPIIEKGDYEYFVHPISDGVPMLEPGLLREIVIKIIRKANLENVDKIVTPAAMGIHISTAVSLMTDIPLVVIRKREYGLDGEVSLHQQTGYSEGDMFINDVNEGDRVLVLDDVLSTGGTMKAVLDALDHIGADVVDTVAIIKKAGPNELDDSDHHVKTLINVTVEDGEVVIVDEHGDD</sequence>
<dbReference type="EC" id="2.4.2.-" evidence="1"/>
<dbReference type="EMBL" id="CP001956">
    <property type="protein sequence ID" value="ADE03427.1"/>
    <property type="molecule type" value="Genomic_DNA"/>
</dbReference>
<dbReference type="RefSeq" id="WP_004043866.1">
    <property type="nucleotide sequence ID" value="NC_013967.1"/>
</dbReference>
<dbReference type="SMR" id="D4GVR1"/>
<dbReference type="STRING" id="309800.HVO_1072"/>
<dbReference type="PaxDb" id="309800-C498_13394"/>
<dbReference type="EnsemblBacteria" id="ADE03427">
    <property type="protein sequence ID" value="ADE03427"/>
    <property type="gene ID" value="HVO_1072"/>
</dbReference>
<dbReference type="GeneID" id="8924192"/>
<dbReference type="KEGG" id="hvo:HVO_1072"/>
<dbReference type="eggNOG" id="arCOG00030">
    <property type="taxonomic scope" value="Archaea"/>
</dbReference>
<dbReference type="HOGENOM" id="CLU_126376_0_0_2"/>
<dbReference type="OrthoDB" id="8323at2157"/>
<dbReference type="Proteomes" id="UP000008243">
    <property type="component" value="Chromosome"/>
</dbReference>
<dbReference type="GO" id="GO:0016740">
    <property type="term" value="F:transferase activity"/>
    <property type="evidence" value="ECO:0007669"/>
    <property type="project" value="UniProtKB-KW"/>
</dbReference>
<dbReference type="GO" id="GO:0006166">
    <property type="term" value="P:purine ribonucleoside salvage"/>
    <property type="evidence" value="ECO:0007669"/>
    <property type="project" value="UniProtKB-KW"/>
</dbReference>
<dbReference type="CDD" id="cd06223">
    <property type="entry name" value="PRTases_typeI"/>
    <property type="match status" value="1"/>
</dbReference>
<dbReference type="Gene3D" id="3.40.50.2020">
    <property type="match status" value="1"/>
</dbReference>
<dbReference type="HAMAP" id="MF_01467">
    <property type="entry name" value="Hypx_phosphoribosyltr"/>
    <property type="match status" value="1"/>
</dbReference>
<dbReference type="InterPro" id="IPR026597">
    <property type="entry name" value="HGPRTase-like"/>
</dbReference>
<dbReference type="InterPro" id="IPR000836">
    <property type="entry name" value="PRibTrfase_dom"/>
</dbReference>
<dbReference type="InterPro" id="IPR029057">
    <property type="entry name" value="PRTase-like"/>
</dbReference>
<dbReference type="InterPro" id="IPR050118">
    <property type="entry name" value="Pur/Pyrimidine_PRTase"/>
</dbReference>
<dbReference type="NCBIfam" id="NF040646">
    <property type="entry name" value="HPT_Archaea"/>
    <property type="match status" value="1"/>
</dbReference>
<dbReference type="NCBIfam" id="NF002635">
    <property type="entry name" value="PRK02304.1-4"/>
    <property type="match status" value="1"/>
</dbReference>
<dbReference type="PANTHER" id="PTHR43864">
    <property type="entry name" value="HYPOXANTHINE/GUANINE PHOSPHORIBOSYLTRANSFERASE"/>
    <property type="match status" value="1"/>
</dbReference>
<dbReference type="PANTHER" id="PTHR43864:SF1">
    <property type="entry name" value="XANTHINE PHOSPHORIBOSYLTRANSFERASE"/>
    <property type="match status" value="1"/>
</dbReference>
<dbReference type="Pfam" id="PF00156">
    <property type="entry name" value="Pribosyltran"/>
    <property type="match status" value="1"/>
</dbReference>
<dbReference type="SUPFAM" id="SSF53271">
    <property type="entry name" value="PRTase-like"/>
    <property type="match status" value="1"/>
</dbReference>
<dbReference type="PROSITE" id="PS00103">
    <property type="entry name" value="PUR_PYR_PR_TRANSFER"/>
    <property type="match status" value="1"/>
</dbReference>
<evidence type="ECO:0000255" key="1">
    <source>
        <dbReference type="HAMAP-Rule" id="MF_01467"/>
    </source>
</evidence>
<feature type="chain" id="PRO_0000415451" description="HGPRTase-like protein 1">
    <location>
        <begin position="1"/>
        <end position="188"/>
    </location>
</feature>
<accession>D4GVR1</accession>
<organism>
    <name type="scientific">Haloferax volcanii (strain ATCC 29605 / DSM 3757 / JCM 8879 / NBRC 14742 / NCIMB 2012 / VKM B-1768 / DS2)</name>
    <name type="common">Halobacterium volcanii</name>
    <dbReference type="NCBI Taxonomy" id="309800"/>
    <lineage>
        <taxon>Archaea</taxon>
        <taxon>Methanobacteriati</taxon>
        <taxon>Methanobacteriota</taxon>
        <taxon>Stenosarchaea group</taxon>
        <taxon>Halobacteria</taxon>
        <taxon>Halobacteriales</taxon>
        <taxon>Haloferacaceae</taxon>
        <taxon>Haloferax</taxon>
    </lineage>
</organism>
<gene>
    <name type="ordered locus">HVO_1072</name>
</gene>
<protein>
    <recommendedName>
        <fullName evidence="1">HGPRTase-like protein 1</fullName>
        <ecNumber evidence="1">2.4.2.-</ecNumber>
    </recommendedName>
</protein>
<proteinExistence type="inferred from homology"/>
<reference key="1">
    <citation type="journal article" date="2010" name="PLoS ONE">
        <title>The complete genome sequence of Haloferax volcanii DS2, a model archaeon.</title>
        <authorList>
            <person name="Hartman A.L."/>
            <person name="Norais C."/>
            <person name="Badger J.H."/>
            <person name="Delmas S."/>
            <person name="Haldenby S."/>
            <person name="Madupu R."/>
            <person name="Robinson J."/>
            <person name="Khouri H."/>
            <person name="Ren Q."/>
            <person name="Lowe T.M."/>
            <person name="Maupin-Furlow J."/>
            <person name="Pohlschroder M."/>
            <person name="Daniels C."/>
            <person name="Pfeiffer F."/>
            <person name="Allers T."/>
            <person name="Eisen J.A."/>
        </authorList>
    </citation>
    <scope>NUCLEOTIDE SEQUENCE [LARGE SCALE GENOMIC DNA]</scope>
    <source>
        <strain>ATCC 29605 / DSM 3757 / JCM 8879 / NBRC 14742 / NCIMB 2012 / VKM B-1768 / DS2</strain>
    </source>
</reference>
<name>HPRL1_HALVD</name>
<keyword id="KW-0660">Purine salvage</keyword>
<keyword id="KW-1185">Reference proteome</keyword>
<keyword id="KW-0808">Transferase</keyword>
<comment type="function">
    <text evidence="1">May catalyze a purine salvage reaction, the substrate is unknown.</text>
</comment>
<comment type="similarity">
    <text evidence="1">Belongs to the purine/pyrimidine phosphoribosyltransferase family. Archaeal HPRT subfamily.</text>
</comment>